<feature type="chain" id="PRO_0000322001" description="C4-dicarboxylate transport protein">
    <location>
        <begin position="1"/>
        <end position="445"/>
    </location>
</feature>
<feature type="transmembrane region" description="Helical" evidence="1">
    <location>
        <begin position="24"/>
        <end position="44"/>
    </location>
</feature>
<feature type="transmembrane region" description="Helical" evidence="1">
    <location>
        <begin position="62"/>
        <end position="82"/>
    </location>
</feature>
<feature type="transmembrane region" description="Helical" evidence="1">
    <location>
        <begin position="105"/>
        <end position="125"/>
    </location>
</feature>
<feature type="transmembrane region" description="Helical" evidence="1">
    <location>
        <begin position="163"/>
        <end position="183"/>
    </location>
</feature>
<feature type="transmembrane region" description="Helical" evidence="1">
    <location>
        <begin position="201"/>
        <end position="221"/>
    </location>
</feature>
<feature type="transmembrane region" description="Helical" evidence="1">
    <location>
        <begin position="237"/>
        <end position="257"/>
    </location>
</feature>
<feature type="transmembrane region" description="Helical" evidence="1">
    <location>
        <begin position="322"/>
        <end position="342"/>
    </location>
</feature>
<feature type="transmembrane region" description="Helical" evidence="1">
    <location>
        <begin position="370"/>
        <end position="390"/>
    </location>
</feature>
<protein>
    <recommendedName>
        <fullName evidence="1">C4-dicarboxylate transport protein</fullName>
    </recommendedName>
</protein>
<comment type="function">
    <text evidence="1">Responsible for the transport of dicarboxylates such as succinate, fumarate, and malate from the periplasm across the membrane.</text>
</comment>
<comment type="subcellular location">
    <subcellularLocation>
        <location evidence="1">Cell inner membrane</location>
        <topology evidence="1">Multi-pass membrane protein</topology>
    </subcellularLocation>
</comment>
<comment type="similarity">
    <text evidence="1">Belongs to the dicarboxylate/amino acid:cation symporter (DAACS) (TC 2.A.23) family.</text>
</comment>
<proteinExistence type="inferred from homology"/>
<accession>Q2IVP8</accession>
<sequence>MSTMTDVGVPETSRPSNAKPWYKVLYIQVLIAIVLGVLVGWLSPHLATNPWIKALGDGFVKLIKMVIAPIIFCTVVSGIAHIQDARKVGRVGIKALVYFEVVSSFALILGLVVGNLLPVGHGLAAKPDAGAVAKYVDQASHMHAVDFFLNIIPESVVGAFAKGDILQVLLFAILFGFALMALGERGHRLRDVIDDTAHAVFGVIAIVMKAAPVGAFGAMAFTIGKYGPAALGNLIGLVALFYATAALFVFVVLGVIAKFVGFNIFKFLGYIKDELLIVLGTSSSESALPQLMEKLERLGCSKSVVGLVVPTGYSFNLDGTNIYMTLATLFIAQALGIELSFSEQVTILLVAMLTSKGASGVTGAGFVTLAGTLAAVNPALVPGMAIVFSIDKFMSEVRALTNITGNGVATVFVSWWEGELDHDRLHANLDKTIDPSDVETAVTTG</sequence>
<name>DCTA_RHOP2</name>
<reference key="1">
    <citation type="submission" date="2006-01" db="EMBL/GenBank/DDBJ databases">
        <title>Complete sequence of Rhodopseudomonas palustris HaA2.</title>
        <authorList>
            <consortium name="US DOE Joint Genome Institute"/>
            <person name="Copeland A."/>
            <person name="Lucas S."/>
            <person name="Lapidus A."/>
            <person name="Barry K."/>
            <person name="Detter J.C."/>
            <person name="Glavina T."/>
            <person name="Hammon N."/>
            <person name="Israni S."/>
            <person name="Pitluck S."/>
            <person name="Chain P."/>
            <person name="Malfatti S."/>
            <person name="Shin M."/>
            <person name="Vergez L."/>
            <person name="Schmutz J."/>
            <person name="Larimer F."/>
            <person name="Land M."/>
            <person name="Hauser L."/>
            <person name="Pelletier D.A."/>
            <person name="Kyrpides N."/>
            <person name="Anderson I."/>
            <person name="Oda Y."/>
            <person name="Harwood C.S."/>
            <person name="Richardson P."/>
        </authorList>
    </citation>
    <scope>NUCLEOTIDE SEQUENCE [LARGE SCALE GENOMIC DNA]</scope>
    <source>
        <strain>HaA2</strain>
    </source>
</reference>
<dbReference type="EMBL" id="CP000250">
    <property type="protein sequence ID" value="ABD07712.1"/>
    <property type="molecule type" value="Genomic_DNA"/>
</dbReference>
<dbReference type="RefSeq" id="WP_011441896.1">
    <property type="nucleotide sequence ID" value="NC_007778.1"/>
</dbReference>
<dbReference type="SMR" id="Q2IVP8"/>
<dbReference type="STRING" id="316058.RPB_3010"/>
<dbReference type="KEGG" id="rpb:RPB_3010"/>
<dbReference type="eggNOG" id="COG1301">
    <property type="taxonomic scope" value="Bacteria"/>
</dbReference>
<dbReference type="HOGENOM" id="CLU_019375_7_0_5"/>
<dbReference type="OrthoDB" id="9766690at2"/>
<dbReference type="Proteomes" id="UP000008809">
    <property type="component" value="Chromosome"/>
</dbReference>
<dbReference type="GO" id="GO:0005886">
    <property type="term" value="C:plasma membrane"/>
    <property type="evidence" value="ECO:0007669"/>
    <property type="project" value="UniProtKB-SubCell"/>
</dbReference>
<dbReference type="GO" id="GO:0015138">
    <property type="term" value="F:fumarate transmembrane transporter activity"/>
    <property type="evidence" value="ECO:0007669"/>
    <property type="project" value="TreeGrafter"/>
</dbReference>
<dbReference type="GO" id="GO:0015366">
    <property type="term" value="F:malate:proton symporter activity"/>
    <property type="evidence" value="ECO:0007669"/>
    <property type="project" value="TreeGrafter"/>
</dbReference>
<dbReference type="GO" id="GO:0015141">
    <property type="term" value="F:succinate transmembrane transporter activity"/>
    <property type="evidence" value="ECO:0007669"/>
    <property type="project" value="TreeGrafter"/>
</dbReference>
<dbReference type="GO" id="GO:0070778">
    <property type="term" value="P:L-aspartate transmembrane transport"/>
    <property type="evidence" value="ECO:0007669"/>
    <property type="project" value="TreeGrafter"/>
</dbReference>
<dbReference type="FunFam" id="1.10.3860.10:FF:000001">
    <property type="entry name" value="C4-dicarboxylate transport protein"/>
    <property type="match status" value="1"/>
</dbReference>
<dbReference type="Gene3D" id="1.10.3860.10">
    <property type="entry name" value="Sodium:dicarboxylate symporter"/>
    <property type="match status" value="1"/>
</dbReference>
<dbReference type="HAMAP" id="MF_01300">
    <property type="entry name" value="C4_dicarb_transport"/>
    <property type="match status" value="1"/>
</dbReference>
<dbReference type="InterPro" id="IPR023954">
    <property type="entry name" value="C4_dicarb_transport"/>
</dbReference>
<dbReference type="InterPro" id="IPR001991">
    <property type="entry name" value="Na-dicarboxylate_symporter"/>
</dbReference>
<dbReference type="InterPro" id="IPR018107">
    <property type="entry name" value="Na-dicarboxylate_symporter_CS"/>
</dbReference>
<dbReference type="InterPro" id="IPR036458">
    <property type="entry name" value="Na:dicarbo_symporter_sf"/>
</dbReference>
<dbReference type="NCBIfam" id="NF002461">
    <property type="entry name" value="PRK01663.1"/>
    <property type="match status" value="1"/>
</dbReference>
<dbReference type="PANTHER" id="PTHR42865:SF1">
    <property type="entry name" value="AEROBIC C4-DICARBOXYLATE TRANSPORT PROTEIN"/>
    <property type="match status" value="1"/>
</dbReference>
<dbReference type="PANTHER" id="PTHR42865">
    <property type="entry name" value="PROTON/GLUTAMATE-ASPARTATE SYMPORTER"/>
    <property type="match status" value="1"/>
</dbReference>
<dbReference type="Pfam" id="PF00375">
    <property type="entry name" value="SDF"/>
    <property type="match status" value="1"/>
</dbReference>
<dbReference type="PRINTS" id="PR00173">
    <property type="entry name" value="EDTRNSPORT"/>
</dbReference>
<dbReference type="SUPFAM" id="SSF118215">
    <property type="entry name" value="Proton glutamate symport protein"/>
    <property type="match status" value="1"/>
</dbReference>
<dbReference type="PROSITE" id="PS00714">
    <property type="entry name" value="NA_DICARBOXYL_SYMP_2"/>
    <property type="match status" value="1"/>
</dbReference>
<organism>
    <name type="scientific">Rhodopseudomonas palustris (strain HaA2)</name>
    <dbReference type="NCBI Taxonomy" id="316058"/>
    <lineage>
        <taxon>Bacteria</taxon>
        <taxon>Pseudomonadati</taxon>
        <taxon>Pseudomonadota</taxon>
        <taxon>Alphaproteobacteria</taxon>
        <taxon>Hyphomicrobiales</taxon>
        <taxon>Nitrobacteraceae</taxon>
        <taxon>Rhodopseudomonas</taxon>
    </lineage>
</organism>
<keyword id="KW-0997">Cell inner membrane</keyword>
<keyword id="KW-1003">Cell membrane</keyword>
<keyword id="KW-0472">Membrane</keyword>
<keyword id="KW-1185">Reference proteome</keyword>
<keyword id="KW-0769">Symport</keyword>
<keyword id="KW-0812">Transmembrane</keyword>
<keyword id="KW-1133">Transmembrane helix</keyword>
<keyword id="KW-0813">Transport</keyword>
<evidence type="ECO:0000255" key="1">
    <source>
        <dbReference type="HAMAP-Rule" id="MF_01300"/>
    </source>
</evidence>
<gene>
    <name evidence="1" type="primary">dctA</name>
    <name type="ordered locus">RPB_3010</name>
</gene>